<evidence type="ECO:0000250" key="1">
    <source>
        <dbReference type="UniProtKB" id="A0A0L1JEW4"/>
    </source>
</evidence>
<evidence type="ECO:0000250" key="2">
    <source>
        <dbReference type="UniProtKB" id="P10614"/>
    </source>
</evidence>
<evidence type="ECO:0000250" key="3">
    <source>
        <dbReference type="UniProtKB" id="Q16850"/>
    </source>
</evidence>
<evidence type="ECO:0000250" key="4">
    <source>
        <dbReference type="UniProtKB" id="Q4WNT5"/>
    </source>
</evidence>
<evidence type="ECO:0000255" key="5"/>
<evidence type="ECO:0000269" key="6">
    <source>
    </source>
</evidence>
<evidence type="ECO:0000303" key="7">
    <source>
    </source>
</evidence>
<evidence type="ECO:0000305" key="8"/>
<keyword id="KW-0349">Heme</keyword>
<keyword id="KW-0408">Iron</keyword>
<keyword id="KW-0444">Lipid biosynthesis</keyword>
<keyword id="KW-0443">Lipid metabolism</keyword>
<keyword id="KW-0472">Membrane</keyword>
<keyword id="KW-0479">Metal-binding</keyword>
<keyword id="KW-0503">Monooxygenase</keyword>
<keyword id="KW-0560">Oxidoreductase</keyword>
<keyword id="KW-0752">Steroid biosynthesis</keyword>
<keyword id="KW-0753">Steroid metabolism</keyword>
<keyword id="KW-0756">Sterol biosynthesis</keyword>
<keyword id="KW-1207">Sterol metabolism</keyword>
<keyword id="KW-0812">Transmembrane</keyword>
<keyword id="KW-1133">Transmembrane helix</keyword>
<feature type="chain" id="PRO_0000461534" description="Sterol 14-alpha demethylase resB">
    <location>
        <begin position="1"/>
        <end position="511"/>
    </location>
</feature>
<feature type="transmembrane region" description="Helical" evidence="5">
    <location>
        <begin position="3"/>
        <end position="23"/>
    </location>
</feature>
<feature type="binding site" description="axial binding residue" evidence="3">
    <location>
        <position position="451"/>
    </location>
    <ligand>
        <name>heme</name>
        <dbReference type="ChEBI" id="CHEBI:30413"/>
    </ligand>
    <ligandPart>
        <name>Fe</name>
        <dbReference type="ChEBI" id="CHEBI:18248"/>
    </ligandPart>
</feature>
<reference key="1">
    <citation type="journal article" date="2024" name="J. Agric. Food Chem.">
        <title>Discovery of a hybrid molecule with phytotoxic activity by genome mining, heterologous expression, and OSMAC strategy.</title>
        <authorList>
            <person name="Lu Y."/>
            <person name="Li Y."/>
            <person name="Dou M."/>
            <person name="Liu D."/>
            <person name="Lin W."/>
            <person name="Fan A."/>
        </authorList>
    </citation>
    <scope>NUCLEOTIDE SEQUENCE [GENOMIC DNA]</scope>
    <scope>FUNCTION</scope>
    <scope>CATALYTIC ACTIVITY</scope>
    <scope>PATHWAY</scope>
</reference>
<dbReference type="EC" id="1.14.14.154" evidence="1"/>
<dbReference type="GO" id="GO:0016020">
    <property type="term" value="C:membrane"/>
    <property type="evidence" value="ECO:0007669"/>
    <property type="project" value="UniProtKB-SubCell"/>
</dbReference>
<dbReference type="GO" id="GO:0020037">
    <property type="term" value="F:heme binding"/>
    <property type="evidence" value="ECO:0007669"/>
    <property type="project" value="InterPro"/>
</dbReference>
<dbReference type="GO" id="GO:0005506">
    <property type="term" value="F:iron ion binding"/>
    <property type="evidence" value="ECO:0007669"/>
    <property type="project" value="InterPro"/>
</dbReference>
<dbReference type="GO" id="GO:0004497">
    <property type="term" value="F:monooxygenase activity"/>
    <property type="evidence" value="ECO:0007669"/>
    <property type="project" value="UniProtKB-KW"/>
</dbReference>
<dbReference type="GO" id="GO:0016705">
    <property type="term" value="F:oxidoreductase activity, acting on paired donors, with incorporation or reduction of molecular oxygen"/>
    <property type="evidence" value="ECO:0007669"/>
    <property type="project" value="InterPro"/>
</dbReference>
<dbReference type="GO" id="GO:0016126">
    <property type="term" value="P:sterol biosynthetic process"/>
    <property type="evidence" value="ECO:0007669"/>
    <property type="project" value="UniProtKB-KW"/>
</dbReference>
<dbReference type="CDD" id="cd11042">
    <property type="entry name" value="CYP51-like"/>
    <property type="match status" value="1"/>
</dbReference>
<dbReference type="FunFam" id="1.10.630.10:FF:000033">
    <property type="entry name" value="14-alpha sterol demethylase"/>
    <property type="match status" value="1"/>
</dbReference>
<dbReference type="Gene3D" id="1.10.630.10">
    <property type="entry name" value="Cytochrome P450"/>
    <property type="match status" value="1"/>
</dbReference>
<dbReference type="InterPro" id="IPR050529">
    <property type="entry name" value="CYP450_sterol_14alpha_dmase"/>
</dbReference>
<dbReference type="InterPro" id="IPR001128">
    <property type="entry name" value="Cyt_P450"/>
</dbReference>
<dbReference type="InterPro" id="IPR017972">
    <property type="entry name" value="Cyt_P450_CS"/>
</dbReference>
<dbReference type="InterPro" id="IPR002403">
    <property type="entry name" value="Cyt_P450_E_grp-IV"/>
</dbReference>
<dbReference type="InterPro" id="IPR036396">
    <property type="entry name" value="Cyt_P450_sf"/>
</dbReference>
<dbReference type="PANTHER" id="PTHR24304:SF2">
    <property type="entry name" value="24-HYDROXYCHOLESTEROL 7-ALPHA-HYDROXYLASE"/>
    <property type="match status" value="1"/>
</dbReference>
<dbReference type="PANTHER" id="PTHR24304">
    <property type="entry name" value="CYTOCHROME P450 FAMILY 7"/>
    <property type="match status" value="1"/>
</dbReference>
<dbReference type="Pfam" id="PF00067">
    <property type="entry name" value="p450"/>
    <property type="match status" value="1"/>
</dbReference>
<dbReference type="PRINTS" id="PR00465">
    <property type="entry name" value="EP450IV"/>
</dbReference>
<dbReference type="PRINTS" id="PR00385">
    <property type="entry name" value="P450"/>
</dbReference>
<dbReference type="SUPFAM" id="SSF48264">
    <property type="entry name" value="Cytochrome P450"/>
    <property type="match status" value="1"/>
</dbReference>
<dbReference type="PROSITE" id="PS00086">
    <property type="entry name" value="CYTOCHROME_P450"/>
    <property type="match status" value="1"/>
</dbReference>
<protein>
    <recommendedName>
        <fullName evidence="7">Sterol 14-alpha demethylase resB</fullName>
        <ecNumber evidence="1">1.14.14.154</ecNumber>
    </recommendedName>
    <alternativeName>
        <fullName evidence="7">Cytochrome P450 monooxygenase resB</fullName>
    </alternativeName>
    <alternativeName>
        <fullName evidence="7">Ergosterol biosynthesis protein resB</fullName>
    </alternativeName>
    <alternativeName>
        <fullName evidence="7">Restricticin biosynthesis cluster protein B</fullName>
    </alternativeName>
</protein>
<gene>
    <name evidence="7" type="primary">resB</name>
</gene>
<organism>
    <name type="scientific">Aspergillus sclerotiorum</name>
    <dbReference type="NCBI Taxonomy" id="138282"/>
    <lineage>
        <taxon>Eukaryota</taxon>
        <taxon>Fungi</taxon>
        <taxon>Dikarya</taxon>
        <taxon>Ascomycota</taxon>
        <taxon>Pezizomycotina</taxon>
        <taxon>Eurotiomycetes</taxon>
        <taxon>Eurotiomycetidae</taxon>
        <taxon>Eurotiales</taxon>
        <taxon>Aspergillaceae</taxon>
        <taxon>Aspergillus</taxon>
        <taxon>Aspergillus subgen. Circumdati</taxon>
    </lineage>
</organism>
<proteinExistence type="evidence at protein level"/>
<name>RESB_ASPSL</name>
<accession>P0DXU9</accession>
<sequence length="511" mass="57075">MSILWIVAYALLAFAASIALNLVYQFLYRTFNKSRPPLVFHWVPFIGSTIHYGMDPYNFFFSCREKYGDIFTFILLGRPTTVYLGTQGNEFILNGKLKDVNAEEVYSPLTTPVFGSDVVYDCPNSKLIEQKKFIKFGLSQAALEAHVPLIEKEVIDYLAQSPNFNGTAGTVDIASAMAEITIFTAGSTLQGEEVRSKLTTEFAVLYHDLDKGFTPINFMLPWAPLPHNKKRDAAHARMRAIYIDIINKRRKAGNAATGKPDMIENLMQCTYKNGQPLPDKEIAHIMITLLMAGQHSSSSIGSWIMLRLASQPAIVEELYQEQLANLERTANGSLPPLQFKDIENLPLHQNVIRETLRLHGSIHSLLRKVKNPLPVPGTPYIIPTSHVLLSAPGVTALSDEYFPNAMAWDPHRWETQAPEESKEDIVDYGYGAMSKGTSSPYLPFGAGRHRCIGEKFAYLNLTVIVATLVRHLRFHNLDGKKGVPGTDYTSLFSGPLKPTRVGWERRAAKSA</sequence>
<comment type="function">
    <text evidence="1 6">Sterol 14-alpha demethylase; part of the gene cluster that mediates the biosynthesis of the tetrahydropyranyl antifungal agent restricticin that acts as an inhibitor of CYP51 and blocks the ergosterol biosynthesis (PubMed:39105744). Sterol 14-alpha-demethylase plays a critical role in the biosynthesis of ergosterol, the major sterol component in fungal membranes that participates in a variety of functions. ResB acts as a self-resistant CYP51 that contains mutations found in CYP51s isolated from azole resistance strains and that is not inhibited by the final product of the cluster, restricticin (By similarity).</text>
</comment>
<comment type="catalytic activity">
    <reaction evidence="4">
        <text>a 14alpha-methyl steroid + 3 reduced [NADPH--hemoprotein reductase] + 3 O2 = a Delta(14) steroid + formate + 3 oxidized [NADPH--hemoprotein reductase] + 4 H2O + 4 H(+)</text>
        <dbReference type="Rhea" id="RHEA:54028"/>
        <dbReference type="Rhea" id="RHEA-COMP:11964"/>
        <dbReference type="Rhea" id="RHEA-COMP:11965"/>
        <dbReference type="ChEBI" id="CHEBI:15377"/>
        <dbReference type="ChEBI" id="CHEBI:15378"/>
        <dbReference type="ChEBI" id="CHEBI:15379"/>
        <dbReference type="ChEBI" id="CHEBI:15740"/>
        <dbReference type="ChEBI" id="CHEBI:57618"/>
        <dbReference type="ChEBI" id="CHEBI:58210"/>
        <dbReference type="ChEBI" id="CHEBI:138029"/>
        <dbReference type="ChEBI" id="CHEBI:138031"/>
        <dbReference type="EC" id="1.14.14.154"/>
    </reaction>
    <physiologicalReaction direction="left-to-right" evidence="4">
        <dbReference type="Rhea" id="RHEA:54029"/>
    </physiologicalReaction>
</comment>
<comment type="catalytic activity">
    <reaction evidence="2">
        <text>a 14alpha-methyl steroid + reduced [NADPH--hemoprotein reductase] + O2 = a 14alpha-hydroxymethyl steroid + oxidized [NADPH--hemoprotein reductase] + H2O + H(+)</text>
        <dbReference type="Rhea" id="RHEA:68060"/>
        <dbReference type="Rhea" id="RHEA-COMP:11964"/>
        <dbReference type="Rhea" id="RHEA-COMP:11965"/>
        <dbReference type="ChEBI" id="CHEBI:15377"/>
        <dbReference type="ChEBI" id="CHEBI:15378"/>
        <dbReference type="ChEBI" id="CHEBI:15379"/>
        <dbReference type="ChEBI" id="CHEBI:57618"/>
        <dbReference type="ChEBI" id="CHEBI:58210"/>
        <dbReference type="ChEBI" id="CHEBI:138029"/>
        <dbReference type="ChEBI" id="CHEBI:176901"/>
    </reaction>
    <physiologicalReaction direction="left-to-right" evidence="2">
        <dbReference type="Rhea" id="RHEA:68061"/>
    </physiologicalReaction>
</comment>
<comment type="catalytic activity">
    <reaction evidence="2">
        <text>a 14alpha-hydroxymethyl steroid + reduced [NADPH--hemoprotein reductase] + O2 = a 14alpha-formyl steroid + oxidized [NADPH--hemoprotein reductase] + 2 H2O + H(+)</text>
        <dbReference type="Rhea" id="RHEA:68064"/>
        <dbReference type="Rhea" id="RHEA-COMP:11964"/>
        <dbReference type="Rhea" id="RHEA-COMP:11965"/>
        <dbReference type="ChEBI" id="CHEBI:15377"/>
        <dbReference type="ChEBI" id="CHEBI:15378"/>
        <dbReference type="ChEBI" id="CHEBI:15379"/>
        <dbReference type="ChEBI" id="CHEBI:57618"/>
        <dbReference type="ChEBI" id="CHEBI:58210"/>
        <dbReference type="ChEBI" id="CHEBI:176901"/>
        <dbReference type="ChEBI" id="CHEBI:176902"/>
    </reaction>
    <physiologicalReaction direction="left-to-right" evidence="2">
        <dbReference type="Rhea" id="RHEA:68065"/>
    </physiologicalReaction>
</comment>
<comment type="catalytic activity">
    <reaction evidence="2">
        <text>a 14alpha-formyl steroid + reduced [NADPH--hemoprotein reductase] + O2 = a Delta(14) steroid + formate + oxidized [NADPH--hemoprotein reductase] + H2O + 2 H(+)</text>
        <dbReference type="Rhea" id="RHEA:68068"/>
        <dbReference type="Rhea" id="RHEA-COMP:11964"/>
        <dbReference type="Rhea" id="RHEA-COMP:11965"/>
        <dbReference type="ChEBI" id="CHEBI:15377"/>
        <dbReference type="ChEBI" id="CHEBI:15378"/>
        <dbReference type="ChEBI" id="CHEBI:15379"/>
        <dbReference type="ChEBI" id="CHEBI:15740"/>
        <dbReference type="ChEBI" id="CHEBI:57618"/>
        <dbReference type="ChEBI" id="CHEBI:58210"/>
        <dbReference type="ChEBI" id="CHEBI:138031"/>
        <dbReference type="ChEBI" id="CHEBI:176902"/>
    </reaction>
    <physiologicalReaction direction="left-to-right" evidence="2">
        <dbReference type="Rhea" id="RHEA:68069"/>
    </physiologicalReaction>
</comment>
<comment type="catalytic activity">
    <reaction evidence="4">
        <text>lanosterol + 3 reduced [NADPH--hemoprotein reductase] + 3 O2 = 4,4-dimethyl-5alpha-cholesta-8,14,24-trien-3beta-ol + formate + 3 oxidized [NADPH--hemoprotein reductase] + 4 H2O + 4 H(+)</text>
        <dbReference type="Rhea" id="RHEA:25286"/>
        <dbReference type="Rhea" id="RHEA-COMP:11964"/>
        <dbReference type="Rhea" id="RHEA-COMP:11965"/>
        <dbReference type="ChEBI" id="CHEBI:15377"/>
        <dbReference type="ChEBI" id="CHEBI:15378"/>
        <dbReference type="ChEBI" id="CHEBI:15379"/>
        <dbReference type="ChEBI" id="CHEBI:15740"/>
        <dbReference type="ChEBI" id="CHEBI:16521"/>
        <dbReference type="ChEBI" id="CHEBI:17813"/>
        <dbReference type="ChEBI" id="CHEBI:57618"/>
        <dbReference type="ChEBI" id="CHEBI:58210"/>
        <dbReference type="EC" id="1.14.14.154"/>
    </reaction>
    <physiologicalReaction direction="left-to-right" evidence="4">
        <dbReference type="Rhea" id="RHEA:25287"/>
    </physiologicalReaction>
</comment>
<comment type="catalytic activity">
    <reaction evidence="2">
        <text>lanosterol + reduced [NADPH--hemoprotein reductase] + O2 = 32-hydroxylanosterol + oxidized [NADPH--hemoprotein reductase] + H2O + H(+)</text>
        <dbReference type="Rhea" id="RHEA:75103"/>
        <dbReference type="Rhea" id="RHEA-COMP:11964"/>
        <dbReference type="Rhea" id="RHEA-COMP:11965"/>
        <dbReference type="ChEBI" id="CHEBI:15377"/>
        <dbReference type="ChEBI" id="CHEBI:15378"/>
        <dbReference type="ChEBI" id="CHEBI:15379"/>
        <dbReference type="ChEBI" id="CHEBI:16521"/>
        <dbReference type="ChEBI" id="CHEBI:57618"/>
        <dbReference type="ChEBI" id="CHEBI:58210"/>
        <dbReference type="ChEBI" id="CHEBI:166806"/>
    </reaction>
    <physiologicalReaction direction="left-to-right" evidence="2">
        <dbReference type="Rhea" id="RHEA:75104"/>
    </physiologicalReaction>
</comment>
<comment type="catalytic activity">
    <reaction evidence="2">
        <text>32-hydroxylanosterol + reduced [NADPH--hemoprotein reductase] + O2 = 32-oxolanosterol + oxidized [NADPH--hemoprotein reductase] + 2 H2O + H(+)</text>
        <dbReference type="Rhea" id="RHEA:75107"/>
        <dbReference type="Rhea" id="RHEA-COMP:11964"/>
        <dbReference type="Rhea" id="RHEA-COMP:11965"/>
        <dbReference type="ChEBI" id="CHEBI:15377"/>
        <dbReference type="ChEBI" id="CHEBI:15378"/>
        <dbReference type="ChEBI" id="CHEBI:15379"/>
        <dbReference type="ChEBI" id="CHEBI:57618"/>
        <dbReference type="ChEBI" id="CHEBI:58210"/>
        <dbReference type="ChEBI" id="CHEBI:166681"/>
        <dbReference type="ChEBI" id="CHEBI:166806"/>
    </reaction>
    <physiologicalReaction direction="left-to-right" evidence="2">
        <dbReference type="Rhea" id="RHEA:75108"/>
    </physiologicalReaction>
</comment>
<comment type="catalytic activity">
    <reaction evidence="2">
        <text>32-oxolanosterol + reduced [NADPH--hemoprotein reductase] + O2 = 4,4-dimethyl-5alpha-cholesta-8,14,24-trien-3beta-ol + formate + oxidized [NADPH--hemoprotein reductase] + H2O + 2 H(+)</text>
        <dbReference type="Rhea" id="RHEA:75111"/>
        <dbReference type="Rhea" id="RHEA-COMP:11964"/>
        <dbReference type="Rhea" id="RHEA-COMP:11965"/>
        <dbReference type="ChEBI" id="CHEBI:15377"/>
        <dbReference type="ChEBI" id="CHEBI:15378"/>
        <dbReference type="ChEBI" id="CHEBI:15379"/>
        <dbReference type="ChEBI" id="CHEBI:15740"/>
        <dbReference type="ChEBI" id="CHEBI:17813"/>
        <dbReference type="ChEBI" id="CHEBI:57618"/>
        <dbReference type="ChEBI" id="CHEBI:58210"/>
        <dbReference type="ChEBI" id="CHEBI:166681"/>
    </reaction>
    <physiologicalReaction direction="left-to-right" evidence="2">
        <dbReference type="Rhea" id="RHEA:75112"/>
    </physiologicalReaction>
</comment>
<comment type="catalytic activity">
    <reaction evidence="4">
        <text>eburicol + 3 reduced [NADPH--hemoprotein reductase] + 3 O2 = 14-demethyleburicol + formate + 3 oxidized [NADPH--hemoprotein reductase] + 4 H2O + 4 H(+)</text>
        <dbReference type="Rhea" id="RHEA:75439"/>
        <dbReference type="Rhea" id="RHEA-COMP:11964"/>
        <dbReference type="Rhea" id="RHEA-COMP:11965"/>
        <dbReference type="ChEBI" id="CHEBI:15377"/>
        <dbReference type="ChEBI" id="CHEBI:15378"/>
        <dbReference type="ChEBI" id="CHEBI:15379"/>
        <dbReference type="ChEBI" id="CHEBI:15740"/>
        <dbReference type="ChEBI" id="CHEBI:57618"/>
        <dbReference type="ChEBI" id="CHEBI:58210"/>
        <dbReference type="ChEBI" id="CHEBI:70315"/>
        <dbReference type="ChEBI" id="CHEBI:194330"/>
    </reaction>
    <physiologicalReaction direction="left-to-right" evidence="4">
        <dbReference type="Rhea" id="RHEA:75440"/>
    </physiologicalReaction>
</comment>
<comment type="catalytic activity">
    <reaction evidence="2">
        <text>eburicol + reduced [NADPH--hemoprotein reductase] + O2 = 32-hydroxyeburicol + oxidized [NADPH--hemoprotein reductase] + H2O + H(+)</text>
        <dbReference type="Rhea" id="RHEA:75427"/>
        <dbReference type="Rhea" id="RHEA-COMP:11964"/>
        <dbReference type="Rhea" id="RHEA-COMP:11965"/>
        <dbReference type="ChEBI" id="CHEBI:15377"/>
        <dbReference type="ChEBI" id="CHEBI:15378"/>
        <dbReference type="ChEBI" id="CHEBI:15379"/>
        <dbReference type="ChEBI" id="CHEBI:57618"/>
        <dbReference type="ChEBI" id="CHEBI:58210"/>
        <dbReference type="ChEBI" id="CHEBI:70315"/>
        <dbReference type="ChEBI" id="CHEBI:194328"/>
    </reaction>
    <physiologicalReaction direction="left-to-right" evidence="2">
        <dbReference type="Rhea" id="RHEA:75428"/>
    </physiologicalReaction>
</comment>
<comment type="catalytic activity">
    <reaction evidence="2">
        <text>32-hydroxyeburicol + reduced [NADPH--hemoprotein reductase] + O2 = 32-oxoeburicol + oxidized [NADPH--hemoprotein reductase] + 2 H2O + H(+)</text>
        <dbReference type="Rhea" id="RHEA:75431"/>
        <dbReference type="Rhea" id="RHEA-COMP:11964"/>
        <dbReference type="Rhea" id="RHEA-COMP:11965"/>
        <dbReference type="ChEBI" id="CHEBI:15377"/>
        <dbReference type="ChEBI" id="CHEBI:15378"/>
        <dbReference type="ChEBI" id="CHEBI:15379"/>
        <dbReference type="ChEBI" id="CHEBI:57618"/>
        <dbReference type="ChEBI" id="CHEBI:58210"/>
        <dbReference type="ChEBI" id="CHEBI:194328"/>
        <dbReference type="ChEBI" id="CHEBI:194329"/>
    </reaction>
    <physiologicalReaction direction="left-to-right" evidence="2">
        <dbReference type="Rhea" id="RHEA:75432"/>
    </physiologicalReaction>
</comment>
<comment type="catalytic activity">
    <reaction evidence="2">
        <text>32-oxoeburicol + reduced [NADPH--hemoprotein reductase] + O2 = 14-demethyleburicol + formate + oxidized [NADPH--hemoprotein reductase] + H2O + 2 H(+)</text>
        <dbReference type="Rhea" id="RHEA:75435"/>
        <dbReference type="Rhea" id="RHEA-COMP:11964"/>
        <dbReference type="Rhea" id="RHEA-COMP:11965"/>
        <dbReference type="ChEBI" id="CHEBI:15377"/>
        <dbReference type="ChEBI" id="CHEBI:15378"/>
        <dbReference type="ChEBI" id="CHEBI:15379"/>
        <dbReference type="ChEBI" id="CHEBI:15740"/>
        <dbReference type="ChEBI" id="CHEBI:57618"/>
        <dbReference type="ChEBI" id="CHEBI:58210"/>
        <dbReference type="ChEBI" id="CHEBI:194329"/>
        <dbReference type="ChEBI" id="CHEBI:194330"/>
    </reaction>
    <physiologicalReaction direction="left-to-right" evidence="2">
        <dbReference type="Rhea" id="RHEA:75436"/>
    </physiologicalReaction>
</comment>
<comment type="cofactor">
    <cofactor evidence="3">
        <name>heme</name>
        <dbReference type="ChEBI" id="CHEBI:30413"/>
    </cofactor>
</comment>
<comment type="subcellular location">
    <subcellularLocation>
        <location evidence="5">Membrane</location>
        <topology evidence="5">Single-pass membrane protein</topology>
    </subcellularLocation>
</comment>
<comment type="similarity">
    <text evidence="8">Belongs to the cytochrome P450 family.</text>
</comment>